<name>Y006_RICPR</name>
<feature type="chain" id="PRO_0000101295" description="Uncharacterized protein RP006">
    <location>
        <begin position="1"/>
        <end position="706"/>
    </location>
</feature>
<accession>Q9ZED6</accession>
<sequence length="706" mass="80295">MVAATGHRICNDCSKACIYQKQDPVNIPLIESNILEETLKLPYGLEIYILLTRWNPLNIYAPLPKEPTNYNILVTGLGPAGFSLSYYLLRSGHNVTAIDGLKITPLSFNIHKPVKFWHEYKNLLSERIPKGFGGVAEYGITIRWDKNNLDILRLILERNNNFKYYDGVALGFNITKEQALDLSFDHVAFCIGAGKPKILNIENFEAKGVRTASDFLMTLQNGGAFLQNSNTNMMIRMPIVIIGGGLTSLDVATESLFYYKKQVEEFAKNYIEKDLTEEDKEIAEEFIAHAKLFKEAKNNEELKKVFNKLGGATVYYRGRLQDSPAYKLNHEELIYTLALGVNFKENMQPLRINIDKYGHVESVEFSITTWLDRRTHKKYHINMCPTVKPSSNTVLIKTKTVIMAIGIENNTQFDYDKYSYFGDCNPKYFGSVVKAITSAKEGYEVINKRLIDNVPSFKGSYACFITQLDYLLTSRINKINILNDKTFELIIHSPLAAKNFQFGQFFRLQNYSKDITKLIEPVALSPADIDIEKGLISFIVYEVGKSTSLCKTLSENEKVVLMGPTGSPLEIPQNKKIIIIDSKYRNVGLLKILKENKNKVIFATYPDIKKHKLTSVDIVIINTSPEIAEELQELKIFGENTELIINVNSLMQCMMKGICGQCIQKVKGKQKYIFACSEQNQNVEIIDFKSLKTRLRQNSLQEKMSN</sequence>
<proteinExistence type="predicted"/>
<reference key="1">
    <citation type="journal article" date="1998" name="Nature">
        <title>The genome sequence of Rickettsia prowazekii and the origin of mitochondria.</title>
        <authorList>
            <person name="Andersson S.G.E."/>
            <person name="Zomorodipour A."/>
            <person name="Andersson J.O."/>
            <person name="Sicheritz-Ponten T."/>
            <person name="Alsmark U.C.M."/>
            <person name="Podowski R.M."/>
            <person name="Naeslund A.K."/>
            <person name="Eriksson A.-S."/>
            <person name="Winkler H.H."/>
            <person name="Kurland C.G."/>
        </authorList>
    </citation>
    <scope>NUCLEOTIDE SEQUENCE [LARGE SCALE GENOMIC DNA]</scope>
    <source>
        <strain>Madrid E</strain>
    </source>
</reference>
<gene>
    <name type="ordered locus">RP006</name>
</gene>
<organism>
    <name type="scientific">Rickettsia prowazekii (strain Madrid E)</name>
    <dbReference type="NCBI Taxonomy" id="272947"/>
    <lineage>
        <taxon>Bacteria</taxon>
        <taxon>Pseudomonadati</taxon>
        <taxon>Pseudomonadota</taxon>
        <taxon>Alphaproteobacteria</taxon>
        <taxon>Rickettsiales</taxon>
        <taxon>Rickettsiaceae</taxon>
        <taxon>Rickettsieae</taxon>
        <taxon>Rickettsia</taxon>
        <taxon>typhus group</taxon>
    </lineage>
</organism>
<dbReference type="EMBL" id="AJ235270">
    <property type="protein sequence ID" value="CAA14479.1"/>
    <property type="molecule type" value="Genomic_DNA"/>
</dbReference>
<dbReference type="PIR" id="H71707">
    <property type="entry name" value="H71707"/>
</dbReference>
<dbReference type="RefSeq" id="NP_220402.1">
    <property type="nucleotide sequence ID" value="NC_000963.1"/>
</dbReference>
<dbReference type="RefSeq" id="WP_010886189.1">
    <property type="nucleotide sequence ID" value="NC_000963.1"/>
</dbReference>
<dbReference type="STRING" id="272947.gene:17555089"/>
<dbReference type="EnsemblBacteria" id="CAA14479">
    <property type="protein sequence ID" value="CAA14479"/>
    <property type="gene ID" value="CAA14479"/>
</dbReference>
<dbReference type="KEGG" id="rpr:RP006"/>
<dbReference type="PATRIC" id="fig|272947.5.peg.6"/>
<dbReference type="eggNOG" id="COG0493">
    <property type="taxonomic scope" value="Bacteria"/>
</dbReference>
<dbReference type="eggNOG" id="COG0543">
    <property type="taxonomic scope" value="Bacteria"/>
</dbReference>
<dbReference type="HOGENOM" id="CLU_006653_0_0_5"/>
<dbReference type="OrthoDB" id="9803192at2"/>
<dbReference type="Proteomes" id="UP000002480">
    <property type="component" value="Chromosome"/>
</dbReference>
<dbReference type="GO" id="GO:0016491">
    <property type="term" value="F:oxidoreductase activity"/>
    <property type="evidence" value="ECO:0007669"/>
    <property type="project" value="InterPro"/>
</dbReference>
<dbReference type="Gene3D" id="3.50.50.60">
    <property type="entry name" value="FAD/NAD(P)-binding domain"/>
    <property type="match status" value="2"/>
</dbReference>
<dbReference type="Gene3D" id="2.40.30.10">
    <property type="entry name" value="Translation factors"/>
    <property type="match status" value="1"/>
</dbReference>
<dbReference type="InterPro" id="IPR036188">
    <property type="entry name" value="FAD/NAD-bd_sf"/>
</dbReference>
<dbReference type="InterPro" id="IPR023753">
    <property type="entry name" value="FAD/NAD-binding_dom"/>
</dbReference>
<dbReference type="InterPro" id="IPR050353">
    <property type="entry name" value="PyrK_electron_transfer"/>
</dbReference>
<dbReference type="InterPro" id="IPR017938">
    <property type="entry name" value="Riboflavin_synthase-like_b-brl"/>
</dbReference>
<dbReference type="NCBIfam" id="NF005128">
    <property type="entry name" value="PRK06567.1"/>
    <property type="match status" value="1"/>
</dbReference>
<dbReference type="PANTHER" id="PTHR43513">
    <property type="entry name" value="DIHYDROOROTATE DEHYDROGENASE B (NAD(+)), ELECTRON TRANSFER SUBUNIT"/>
    <property type="match status" value="1"/>
</dbReference>
<dbReference type="PANTHER" id="PTHR43513:SF3">
    <property type="entry name" value="DIHYDROOROTATE DEHYDROGENASE B (NAD(+)), ELECTRON TRANSFER SUBUNIT-RELATED"/>
    <property type="match status" value="1"/>
</dbReference>
<dbReference type="Pfam" id="PF07992">
    <property type="entry name" value="Pyr_redox_2"/>
    <property type="match status" value="1"/>
</dbReference>
<dbReference type="PRINTS" id="PR00368">
    <property type="entry name" value="FADPNR"/>
</dbReference>
<dbReference type="SUPFAM" id="SSF51971">
    <property type="entry name" value="Nucleotide-binding domain"/>
    <property type="match status" value="1"/>
</dbReference>
<dbReference type="SUPFAM" id="SSF63380">
    <property type="entry name" value="Riboflavin synthase domain-like"/>
    <property type="match status" value="1"/>
</dbReference>
<keyword id="KW-1185">Reference proteome</keyword>
<protein>
    <recommendedName>
        <fullName>Uncharacterized protein RP006</fullName>
    </recommendedName>
</protein>